<comment type="function">
    <text evidence="1">Can catalyze the hydrolysis of ATP in the presence of single-stranded DNA, the ATP-dependent uptake of single-stranded DNA by duplex DNA, and the ATP-dependent hybridization of homologous single-stranded DNAs. It interacts with LexA causing its activation and leading to its autocatalytic cleavage.</text>
</comment>
<comment type="subcellular location">
    <subcellularLocation>
        <location evidence="1">Cytoplasm</location>
    </subcellularLocation>
</comment>
<comment type="similarity">
    <text evidence="1">Belongs to the RecA family.</text>
</comment>
<reference key="1">
    <citation type="submission" date="2008-06" db="EMBL/GenBank/DDBJ databases">
        <title>Complete sequence of Stenotrophomonas maltophilia R551-3.</title>
        <authorList>
            <consortium name="US DOE Joint Genome Institute"/>
            <person name="Lucas S."/>
            <person name="Copeland A."/>
            <person name="Lapidus A."/>
            <person name="Glavina del Rio T."/>
            <person name="Dalin E."/>
            <person name="Tice H."/>
            <person name="Pitluck S."/>
            <person name="Chain P."/>
            <person name="Malfatti S."/>
            <person name="Shin M."/>
            <person name="Vergez L."/>
            <person name="Lang D."/>
            <person name="Schmutz J."/>
            <person name="Larimer F."/>
            <person name="Land M."/>
            <person name="Hauser L."/>
            <person name="Kyrpides N."/>
            <person name="Mikhailova N."/>
            <person name="Taghavi S."/>
            <person name="Monchy S."/>
            <person name="Newman L."/>
            <person name="Vangronsveld J."/>
            <person name="van der Lelie D."/>
            <person name="Richardson P."/>
        </authorList>
    </citation>
    <scope>NUCLEOTIDE SEQUENCE [LARGE SCALE GENOMIC DNA]</scope>
    <source>
        <strain>R551-3</strain>
    </source>
</reference>
<evidence type="ECO:0000255" key="1">
    <source>
        <dbReference type="HAMAP-Rule" id="MF_00268"/>
    </source>
</evidence>
<keyword id="KW-0067">ATP-binding</keyword>
<keyword id="KW-0963">Cytoplasm</keyword>
<keyword id="KW-0227">DNA damage</keyword>
<keyword id="KW-0233">DNA recombination</keyword>
<keyword id="KW-0234">DNA repair</keyword>
<keyword id="KW-0238">DNA-binding</keyword>
<keyword id="KW-0547">Nucleotide-binding</keyword>
<keyword id="KW-0742">SOS response</keyword>
<protein>
    <recommendedName>
        <fullName evidence="1">Protein RecA</fullName>
    </recommendedName>
    <alternativeName>
        <fullName evidence="1">Recombinase A</fullName>
    </alternativeName>
</protein>
<gene>
    <name evidence="1" type="primary">recA</name>
    <name type="ordered locus">Smal_1476</name>
</gene>
<feature type="chain" id="PRO_1000114371" description="Protein RecA">
    <location>
        <begin position="1"/>
        <end position="345"/>
    </location>
</feature>
<feature type="binding site" evidence="1">
    <location>
        <begin position="65"/>
        <end position="72"/>
    </location>
    <ligand>
        <name>ATP</name>
        <dbReference type="ChEBI" id="CHEBI:30616"/>
    </ligand>
</feature>
<proteinExistence type="inferred from homology"/>
<accession>B4SRB0</accession>
<organism>
    <name type="scientific">Stenotrophomonas maltophilia (strain R551-3)</name>
    <dbReference type="NCBI Taxonomy" id="391008"/>
    <lineage>
        <taxon>Bacteria</taxon>
        <taxon>Pseudomonadati</taxon>
        <taxon>Pseudomonadota</taxon>
        <taxon>Gammaproteobacteria</taxon>
        <taxon>Lysobacterales</taxon>
        <taxon>Lysobacteraceae</taxon>
        <taxon>Stenotrophomonas</taxon>
        <taxon>Stenotrophomonas maltophilia group</taxon>
    </lineage>
</organism>
<dbReference type="EMBL" id="CP001111">
    <property type="protein sequence ID" value="ACF51181.1"/>
    <property type="molecule type" value="Genomic_DNA"/>
</dbReference>
<dbReference type="RefSeq" id="WP_012510666.1">
    <property type="nucleotide sequence ID" value="NC_011071.1"/>
</dbReference>
<dbReference type="SMR" id="B4SRB0"/>
<dbReference type="STRING" id="391008.Smal_1476"/>
<dbReference type="KEGG" id="smt:Smal_1476"/>
<dbReference type="eggNOG" id="COG0468">
    <property type="taxonomic scope" value="Bacteria"/>
</dbReference>
<dbReference type="HOGENOM" id="CLU_040469_1_2_6"/>
<dbReference type="OrthoDB" id="9776733at2"/>
<dbReference type="Proteomes" id="UP000001867">
    <property type="component" value="Chromosome"/>
</dbReference>
<dbReference type="GO" id="GO:0005829">
    <property type="term" value="C:cytosol"/>
    <property type="evidence" value="ECO:0007669"/>
    <property type="project" value="TreeGrafter"/>
</dbReference>
<dbReference type="GO" id="GO:0005524">
    <property type="term" value="F:ATP binding"/>
    <property type="evidence" value="ECO:0007669"/>
    <property type="project" value="UniProtKB-UniRule"/>
</dbReference>
<dbReference type="GO" id="GO:0016887">
    <property type="term" value="F:ATP hydrolysis activity"/>
    <property type="evidence" value="ECO:0007669"/>
    <property type="project" value="InterPro"/>
</dbReference>
<dbReference type="GO" id="GO:0140664">
    <property type="term" value="F:ATP-dependent DNA damage sensor activity"/>
    <property type="evidence" value="ECO:0007669"/>
    <property type="project" value="InterPro"/>
</dbReference>
<dbReference type="GO" id="GO:0003684">
    <property type="term" value="F:damaged DNA binding"/>
    <property type="evidence" value="ECO:0007669"/>
    <property type="project" value="UniProtKB-UniRule"/>
</dbReference>
<dbReference type="GO" id="GO:0003697">
    <property type="term" value="F:single-stranded DNA binding"/>
    <property type="evidence" value="ECO:0007669"/>
    <property type="project" value="UniProtKB-UniRule"/>
</dbReference>
<dbReference type="GO" id="GO:0006310">
    <property type="term" value="P:DNA recombination"/>
    <property type="evidence" value="ECO:0007669"/>
    <property type="project" value="UniProtKB-UniRule"/>
</dbReference>
<dbReference type="GO" id="GO:0006281">
    <property type="term" value="P:DNA repair"/>
    <property type="evidence" value="ECO:0007669"/>
    <property type="project" value="UniProtKB-UniRule"/>
</dbReference>
<dbReference type="GO" id="GO:0009432">
    <property type="term" value="P:SOS response"/>
    <property type="evidence" value="ECO:0007669"/>
    <property type="project" value="UniProtKB-UniRule"/>
</dbReference>
<dbReference type="CDD" id="cd00983">
    <property type="entry name" value="RecA"/>
    <property type="match status" value="1"/>
</dbReference>
<dbReference type="FunFam" id="3.40.50.300:FF:000087">
    <property type="entry name" value="Recombinase RecA"/>
    <property type="match status" value="1"/>
</dbReference>
<dbReference type="Gene3D" id="3.40.50.300">
    <property type="entry name" value="P-loop containing nucleotide triphosphate hydrolases"/>
    <property type="match status" value="1"/>
</dbReference>
<dbReference type="HAMAP" id="MF_00268">
    <property type="entry name" value="RecA"/>
    <property type="match status" value="1"/>
</dbReference>
<dbReference type="InterPro" id="IPR003593">
    <property type="entry name" value="AAA+_ATPase"/>
</dbReference>
<dbReference type="InterPro" id="IPR013765">
    <property type="entry name" value="DNA_recomb/repair_RecA"/>
</dbReference>
<dbReference type="InterPro" id="IPR020584">
    <property type="entry name" value="DNA_recomb/repair_RecA_CS"/>
</dbReference>
<dbReference type="InterPro" id="IPR027417">
    <property type="entry name" value="P-loop_NTPase"/>
</dbReference>
<dbReference type="InterPro" id="IPR049261">
    <property type="entry name" value="RecA-like_C"/>
</dbReference>
<dbReference type="InterPro" id="IPR049428">
    <property type="entry name" value="RecA-like_N"/>
</dbReference>
<dbReference type="InterPro" id="IPR020588">
    <property type="entry name" value="RecA_ATP-bd"/>
</dbReference>
<dbReference type="InterPro" id="IPR023400">
    <property type="entry name" value="RecA_C_sf"/>
</dbReference>
<dbReference type="InterPro" id="IPR020587">
    <property type="entry name" value="RecA_monomer-monomer_interface"/>
</dbReference>
<dbReference type="NCBIfam" id="TIGR02012">
    <property type="entry name" value="tigrfam_recA"/>
    <property type="match status" value="1"/>
</dbReference>
<dbReference type="PANTHER" id="PTHR45900:SF1">
    <property type="entry name" value="MITOCHONDRIAL DNA REPAIR PROTEIN RECA HOMOLOG-RELATED"/>
    <property type="match status" value="1"/>
</dbReference>
<dbReference type="PANTHER" id="PTHR45900">
    <property type="entry name" value="RECA"/>
    <property type="match status" value="1"/>
</dbReference>
<dbReference type="Pfam" id="PF00154">
    <property type="entry name" value="RecA"/>
    <property type="match status" value="1"/>
</dbReference>
<dbReference type="Pfam" id="PF21096">
    <property type="entry name" value="RecA_C"/>
    <property type="match status" value="1"/>
</dbReference>
<dbReference type="PRINTS" id="PR00142">
    <property type="entry name" value="RECA"/>
</dbReference>
<dbReference type="SMART" id="SM00382">
    <property type="entry name" value="AAA"/>
    <property type="match status" value="1"/>
</dbReference>
<dbReference type="SUPFAM" id="SSF52540">
    <property type="entry name" value="P-loop containing nucleoside triphosphate hydrolases"/>
    <property type="match status" value="1"/>
</dbReference>
<dbReference type="SUPFAM" id="SSF54752">
    <property type="entry name" value="RecA protein, C-terminal domain"/>
    <property type="match status" value="1"/>
</dbReference>
<dbReference type="PROSITE" id="PS00321">
    <property type="entry name" value="RECA_1"/>
    <property type="match status" value="1"/>
</dbReference>
<dbReference type="PROSITE" id="PS50162">
    <property type="entry name" value="RECA_2"/>
    <property type="match status" value="1"/>
</dbReference>
<dbReference type="PROSITE" id="PS50163">
    <property type="entry name" value="RECA_3"/>
    <property type="match status" value="1"/>
</dbReference>
<sequence>MDENKKRALAAALGQIEKQFGKGSVMRMGDRVVEPVEAIPTGSLMLDIALGIGGLPKGRVVEIYGPESSGKTTLTLQAIAECQKLGGTAAFIDAEHALDPIYAAKLGVNVDDLLLSQPDTGEQALEIADMLVRSGSVDILVVDSVAALTPKAEIEGEMGDQLPGLQARLMSQALRKLTGNIKRSNTLVVFINQLRMKIGVMMPGQSPEVTTGGNALKFYASVRLDIRRIGAIKKGDEIIGNQTKIKVVKNKLAPPFKQVITEILYGEGISREGELIDMGVDAKLVEKAGAWYSYGEERIGQGKDNARGYLRDNPTVAAKLEAELREKFQPSEAAREEGDDEGDDE</sequence>
<name>RECA_STRM5</name>